<gene>
    <name evidence="1" type="primary">cca</name>
    <name type="ordered locus">PSPPH_0626</name>
</gene>
<sequence length="409" mass="46120">MQIYKVGGAVRDRLLGQPVTDIDWVVVGASTEDMLVKGYRPVGTDFPVFLHPLTNEEYALARTERKSGVGYGGFVFHASPEVTLEQDLIRRDLTINAMAEDKDGNLTDPYNGQKDLEARILRHVSPAFAEDPLRVLRVARFAARYARYGFTIAPETLGLMRQLSESGELKALTAERSWKEISRALMEEQPQVFIQVLHDCGALKELMPEVEALFGVPQPAAHHPEIDTGVHVLSVLEQSAIHKHPLTVRWACLLHDLGKGLTPEAEWPRHIAHEHTGLRLIKAVNERFRVPRECQELALLVGQYHTHGHRALELKPSTLLELLQSFDVYRRPQRFEEFIAACEMDARGRHGFEQRSYPQADYLRGAAQAARTVSVQPLLEKGFKGKELGDALKNERLKALKIYKAEHVA</sequence>
<protein>
    <recommendedName>
        <fullName evidence="1">Multifunctional CCA protein</fullName>
    </recommendedName>
    <domain>
        <recommendedName>
            <fullName evidence="1">CCA-adding enzyme</fullName>
            <ecNumber evidence="1">2.7.7.72</ecNumber>
        </recommendedName>
        <alternativeName>
            <fullName evidence="1">CCA tRNA nucleotidyltransferase</fullName>
        </alternativeName>
        <alternativeName>
            <fullName evidence="1">tRNA CCA-pyrophosphorylase</fullName>
        </alternativeName>
        <alternativeName>
            <fullName evidence="1">tRNA adenylyl-/cytidylyl-transferase</fullName>
        </alternativeName>
        <alternativeName>
            <fullName evidence="1">tRNA nucleotidyltransferase</fullName>
        </alternativeName>
        <alternativeName>
            <fullName evidence="1">tRNA-NT</fullName>
        </alternativeName>
    </domain>
    <domain>
        <recommendedName>
            <fullName evidence="1">2'-nucleotidase</fullName>
            <ecNumber evidence="1">3.1.3.-</ecNumber>
        </recommendedName>
    </domain>
    <domain>
        <recommendedName>
            <fullName evidence="1">2',3'-cyclic phosphodiesterase</fullName>
            <ecNumber evidence="1">3.1.4.-</ecNumber>
        </recommendedName>
    </domain>
    <domain>
        <recommendedName>
            <fullName evidence="1">Phosphatase</fullName>
            <ecNumber evidence="1">3.1.3.-</ecNumber>
        </recommendedName>
    </domain>
</protein>
<reference key="1">
    <citation type="journal article" date="2005" name="J. Bacteriol.">
        <title>Whole-genome sequence analysis of Pseudomonas syringae pv. phaseolicola 1448A reveals divergence among pathovars in genes involved in virulence and transposition.</title>
        <authorList>
            <person name="Joardar V."/>
            <person name="Lindeberg M."/>
            <person name="Jackson R.W."/>
            <person name="Selengut J."/>
            <person name="Dodson R."/>
            <person name="Brinkac L.M."/>
            <person name="Daugherty S.C."/>
            <person name="DeBoy R.T."/>
            <person name="Durkin A.S."/>
            <person name="Gwinn Giglio M."/>
            <person name="Madupu R."/>
            <person name="Nelson W.C."/>
            <person name="Rosovitz M.J."/>
            <person name="Sullivan S.A."/>
            <person name="Crabtree J."/>
            <person name="Creasy T."/>
            <person name="Davidsen T.M."/>
            <person name="Haft D.H."/>
            <person name="Zafar N."/>
            <person name="Zhou L."/>
            <person name="Halpin R."/>
            <person name="Holley T."/>
            <person name="Khouri H.M."/>
            <person name="Feldblyum T.V."/>
            <person name="White O."/>
            <person name="Fraser C.M."/>
            <person name="Chatterjee A.K."/>
            <person name="Cartinhour S."/>
            <person name="Schneider D."/>
            <person name="Mansfield J.W."/>
            <person name="Collmer A."/>
            <person name="Buell R."/>
        </authorList>
    </citation>
    <scope>NUCLEOTIDE SEQUENCE [LARGE SCALE GENOMIC DNA]</scope>
    <source>
        <strain>1448A / Race 6</strain>
    </source>
</reference>
<proteinExistence type="inferred from homology"/>
<keyword id="KW-0067">ATP-binding</keyword>
<keyword id="KW-0378">Hydrolase</keyword>
<keyword id="KW-0460">Magnesium</keyword>
<keyword id="KW-0479">Metal-binding</keyword>
<keyword id="KW-0511">Multifunctional enzyme</keyword>
<keyword id="KW-0533">Nickel</keyword>
<keyword id="KW-0547">Nucleotide-binding</keyword>
<keyword id="KW-0548">Nucleotidyltransferase</keyword>
<keyword id="KW-0692">RNA repair</keyword>
<keyword id="KW-0694">RNA-binding</keyword>
<keyword id="KW-0808">Transferase</keyword>
<keyword id="KW-0819">tRNA processing</keyword>
<name>CCA_PSE14</name>
<accession>Q48NU4</accession>
<organism>
    <name type="scientific">Pseudomonas savastanoi pv. phaseolicola (strain 1448A / Race 6)</name>
    <name type="common">Pseudomonas syringae pv. phaseolicola (strain 1448A / Race 6)</name>
    <dbReference type="NCBI Taxonomy" id="264730"/>
    <lineage>
        <taxon>Bacteria</taxon>
        <taxon>Pseudomonadati</taxon>
        <taxon>Pseudomonadota</taxon>
        <taxon>Gammaproteobacteria</taxon>
        <taxon>Pseudomonadales</taxon>
        <taxon>Pseudomonadaceae</taxon>
        <taxon>Pseudomonas</taxon>
    </lineage>
</organism>
<dbReference type="EC" id="2.7.7.72" evidence="1"/>
<dbReference type="EC" id="3.1.3.-" evidence="1"/>
<dbReference type="EC" id="3.1.4.-" evidence="1"/>
<dbReference type="EMBL" id="CP000058">
    <property type="protein sequence ID" value="AAZ33177.1"/>
    <property type="molecule type" value="Genomic_DNA"/>
</dbReference>
<dbReference type="RefSeq" id="WP_004667103.1">
    <property type="nucleotide sequence ID" value="NC_005773.3"/>
</dbReference>
<dbReference type="SMR" id="Q48NU4"/>
<dbReference type="KEGG" id="psp:PSPPH_0626"/>
<dbReference type="eggNOG" id="COG0617">
    <property type="taxonomic scope" value="Bacteria"/>
</dbReference>
<dbReference type="HOGENOM" id="CLU_015961_1_1_6"/>
<dbReference type="Proteomes" id="UP000000551">
    <property type="component" value="Chromosome"/>
</dbReference>
<dbReference type="GO" id="GO:0005524">
    <property type="term" value="F:ATP binding"/>
    <property type="evidence" value="ECO:0007669"/>
    <property type="project" value="UniProtKB-UniRule"/>
</dbReference>
<dbReference type="GO" id="GO:0004810">
    <property type="term" value="F:CCA tRNA nucleotidyltransferase activity"/>
    <property type="evidence" value="ECO:0007669"/>
    <property type="project" value="UniProtKB-UniRule"/>
</dbReference>
<dbReference type="GO" id="GO:0004112">
    <property type="term" value="F:cyclic-nucleotide phosphodiesterase activity"/>
    <property type="evidence" value="ECO:0007669"/>
    <property type="project" value="UniProtKB-UniRule"/>
</dbReference>
<dbReference type="GO" id="GO:0000287">
    <property type="term" value="F:magnesium ion binding"/>
    <property type="evidence" value="ECO:0007669"/>
    <property type="project" value="UniProtKB-UniRule"/>
</dbReference>
<dbReference type="GO" id="GO:0016791">
    <property type="term" value="F:phosphatase activity"/>
    <property type="evidence" value="ECO:0007669"/>
    <property type="project" value="UniProtKB-UniRule"/>
</dbReference>
<dbReference type="GO" id="GO:0000049">
    <property type="term" value="F:tRNA binding"/>
    <property type="evidence" value="ECO:0007669"/>
    <property type="project" value="UniProtKB-UniRule"/>
</dbReference>
<dbReference type="GO" id="GO:0042245">
    <property type="term" value="P:RNA repair"/>
    <property type="evidence" value="ECO:0007669"/>
    <property type="project" value="UniProtKB-KW"/>
</dbReference>
<dbReference type="GO" id="GO:0001680">
    <property type="term" value="P:tRNA 3'-terminal CCA addition"/>
    <property type="evidence" value="ECO:0007669"/>
    <property type="project" value="UniProtKB-UniRule"/>
</dbReference>
<dbReference type="CDD" id="cd00077">
    <property type="entry name" value="HDc"/>
    <property type="match status" value="1"/>
</dbReference>
<dbReference type="CDD" id="cd05398">
    <property type="entry name" value="NT_ClassII-CCAase"/>
    <property type="match status" value="1"/>
</dbReference>
<dbReference type="FunFam" id="1.10.3090.10:FF:000001">
    <property type="entry name" value="Multifunctional CCA protein"/>
    <property type="match status" value="1"/>
</dbReference>
<dbReference type="FunFam" id="3.30.460.10:FF:000016">
    <property type="entry name" value="Multifunctional CCA protein"/>
    <property type="match status" value="1"/>
</dbReference>
<dbReference type="Gene3D" id="3.30.460.10">
    <property type="entry name" value="Beta Polymerase, domain 2"/>
    <property type="match status" value="1"/>
</dbReference>
<dbReference type="Gene3D" id="1.10.3090.10">
    <property type="entry name" value="cca-adding enzyme, domain 2"/>
    <property type="match status" value="1"/>
</dbReference>
<dbReference type="HAMAP" id="MF_01261">
    <property type="entry name" value="CCA_bact_type1"/>
    <property type="match status" value="1"/>
</dbReference>
<dbReference type="HAMAP" id="MF_01262">
    <property type="entry name" value="CCA_bact_type2"/>
    <property type="match status" value="1"/>
</dbReference>
<dbReference type="InterPro" id="IPR012006">
    <property type="entry name" value="CCA_bact"/>
</dbReference>
<dbReference type="InterPro" id="IPR003607">
    <property type="entry name" value="HD/PDEase_dom"/>
</dbReference>
<dbReference type="InterPro" id="IPR006674">
    <property type="entry name" value="HD_domain"/>
</dbReference>
<dbReference type="InterPro" id="IPR043519">
    <property type="entry name" value="NT_sf"/>
</dbReference>
<dbReference type="InterPro" id="IPR002646">
    <property type="entry name" value="PolA_pol_head_dom"/>
</dbReference>
<dbReference type="InterPro" id="IPR032828">
    <property type="entry name" value="PolyA_RNA-bd"/>
</dbReference>
<dbReference type="InterPro" id="IPR050124">
    <property type="entry name" value="tRNA_CCA-adding_enzyme"/>
</dbReference>
<dbReference type="NCBIfam" id="NF008137">
    <property type="entry name" value="PRK10885.1"/>
    <property type="match status" value="1"/>
</dbReference>
<dbReference type="PANTHER" id="PTHR47545">
    <property type="entry name" value="MULTIFUNCTIONAL CCA PROTEIN"/>
    <property type="match status" value="1"/>
</dbReference>
<dbReference type="PANTHER" id="PTHR47545:SF1">
    <property type="entry name" value="MULTIFUNCTIONAL CCA PROTEIN"/>
    <property type="match status" value="1"/>
</dbReference>
<dbReference type="Pfam" id="PF01966">
    <property type="entry name" value="HD"/>
    <property type="match status" value="1"/>
</dbReference>
<dbReference type="Pfam" id="PF01743">
    <property type="entry name" value="PolyA_pol"/>
    <property type="match status" value="1"/>
</dbReference>
<dbReference type="Pfam" id="PF12627">
    <property type="entry name" value="PolyA_pol_RNAbd"/>
    <property type="match status" value="1"/>
</dbReference>
<dbReference type="PIRSF" id="PIRSF000813">
    <property type="entry name" value="CCA_bact"/>
    <property type="match status" value="1"/>
</dbReference>
<dbReference type="SUPFAM" id="SSF81301">
    <property type="entry name" value="Nucleotidyltransferase"/>
    <property type="match status" value="1"/>
</dbReference>
<dbReference type="SUPFAM" id="SSF81891">
    <property type="entry name" value="Poly A polymerase C-terminal region-like"/>
    <property type="match status" value="1"/>
</dbReference>
<dbReference type="PROSITE" id="PS51831">
    <property type="entry name" value="HD"/>
    <property type="match status" value="1"/>
</dbReference>
<comment type="function">
    <text evidence="1">Catalyzes the addition and repair of the essential 3'-terminal CCA sequence in tRNAs without using a nucleic acid template. Adds these three nucleotides in the order of C, C, and A to the tRNA nucleotide-73, using CTP and ATP as substrates and producing inorganic pyrophosphate. tRNA 3'-terminal CCA addition is required both for tRNA processing and repair. Also involved in tRNA surveillance by mediating tandem CCA addition to generate a CCACCA at the 3' terminus of unstable tRNAs. While stable tRNAs receive only 3'-terminal CCA, unstable tRNAs are marked with CCACCA and rapidly degraded.</text>
</comment>
<comment type="catalytic activity">
    <reaction evidence="1">
        <text>a tRNA precursor + 2 CTP + ATP = a tRNA with a 3' CCA end + 3 diphosphate</text>
        <dbReference type="Rhea" id="RHEA:14433"/>
        <dbReference type="Rhea" id="RHEA-COMP:10465"/>
        <dbReference type="Rhea" id="RHEA-COMP:10468"/>
        <dbReference type="ChEBI" id="CHEBI:30616"/>
        <dbReference type="ChEBI" id="CHEBI:33019"/>
        <dbReference type="ChEBI" id="CHEBI:37563"/>
        <dbReference type="ChEBI" id="CHEBI:74896"/>
        <dbReference type="ChEBI" id="CHEBI:83071"/>
        <dbReference type="EC" id="2.7.7.72"/>
    </reaction>
</comment>
<comment type="catalytic activity">
    <reaction evidence="1">
        <text>a tRNA with a 3' CCA end + 2 CTP + ATP = a tRNA with a 3' CCACCA end + 3 diphosphate</text>
        <dbReference type="Rhea" id="RHEA:76235"/>
        <dbReference type="Rhea" id="RHEA-COMP:10468"/>
        <dbReference type="Rhea" id="RHEA-COMP:18655"/>
        <dbReference type="ChEBI" id="CHEBI:30616"/>
        <dbReference type="ChEBI" id="CHEBI:33019"/>
        <dbReference type="ChEBI" id="CHEBI:37563"/>
        <dbReference type="ChEBI" id="CHEBI:83071"/>
        <dbReference type="ChEBI" id="CHEBI:195187"/>
    </reaction>
    <physiologicalReaction direction="left-to-right" evidence="1">
        <dbReference type="Rhea" id="RHEA:76236"/>
    </physiologicalReaction>
</comment>
<comment type="cofactor">
    <cofactor evidence="1">
        <name>Mg(2+)</name>
        <dbReference type="ChEBI" id="CHEBI:18420"/>
    </cofactor>
    <text evidence="1">Magnesium is required for nucleotidyltransferase activity.</text>
</comment>
<comment type="cofactor">
    <cofactor evidence="1">
        <name>Ni(2+)</name>
        <dbReference type="ChEBI" id="CHEBI:49786"/>
    </cofactor>
    <text evidence="1">Nickel for phosphatase activity.</text>
</comment>
<comment type="subunit">
    <text evidence="1">Monomer. Can also form homodimers and oligomers.</text>
</comment>
<comment type="domain">
    <text evidence="1">Comprises two domains: an N-terminal domain containing the nucleotidyltransferase activity and a C-terminal HD domain associated with both phosphodiesterase and phosphatase activities.</text>
</comment>
<comment type="miscellaneous">
    <text evidence="1">A single active site specifically recognizes both ATP and CTP and is responsible for their addition.</text>
</comment>
<comment type="similarity">
    <text evidence="1">Belongs to the tRNA nucleotidyltransferase/poly(A) polymerase family. Bacterial CCA-adding enzyme type 1 subfamily.</text>
</comment>
<evidence type="ECO:0000255" key="1">
    <source>
        <dbReference type="HAMAP-Rule" id="MF_01261"/>
    </source>
</evidence>
<feature type="chain" id="PRO_1000054279" description="Multifunctional CCA protein">
    <location>
        <begin position="1"/>
        <end position="409"/>
    </location>
</feature>
<feature type="domain" description="HD" evidence="1">
    <location>
        <begin position="228"/>
        <end position="329"/>
    </location>
</feature>
<feature type="binding site" evidence="1">
    <location>
        <position position="8"/>
    </location>
    <ligand>
        <name>ATP</name>
        <dbReference type="ChEBI" id="CHEBI:30616"/>
    </ligand>
</feature>
<feature type="binding site" evidence="1">
    <location>
        <position position="8"/>
    </location>
    <ligand>
        <name>CTP</name>
        <dbReference type="ChEBI" id="CHEBI:37563"/>
    </ligand>
</feature>
<feature type="binding site" evidence="1">
    <location>
        <position position="11"/>
    </location>
    <ligand>
        <name>ATP</name>
        <dbReference type="ChEBI" id="CHEBI:30616"/>
    </ligand>
</feature>
<feature type="binding site" evidence="1">
    <location>
        <position position="11"/>
    </location>
    <ligand>
        <name>CTP</name>
        <dbReference type="ChEBI" id="CHEBI:37563"/>
    </ligand>
</feature>
<feature type="binding site" evidence="1">
    <location>
        <position position="21"/>
    </location>
    <ligand>
        <name>Mg(2+)</name>
        <dbReference type="ChEBI" id="CHEBI:18420"/>
    </ligand>
</feature>
<feature type="binding site" evidence="1">
    <location>
        <position position="23"/>
    </location>
    <ligand>
        <name>Mg(2+)</name>
        <dbReference type="ChEBI" id="CHEBI:18420"/>
    </ligand>
</feature>
<feature type="binding site" evidence="1">
    <location>
        <position position="91"/>
    </location>
    <ligand>
        <name>ATP</name>
        <dbReference type="ChEBI" id="CHEBI:30616"/>
    </ligand>
</feature>
<feature type="binding site" evidence="1">
    <location>
        <position position="91"/>
    </location>
    <ligand>
        <name>CTP</name>
        <dbReference type="ChEBI" id="CHEBI:37563"/>
    </ligand>
</feature>
<feature type="binding site" evidence="1">
    <location>
        <position position="137"/>
    </location>
    <ligand>
        <name>ATP</name>
        <dbReference type="ChEBI" id="CHEBI:30616"/>
    </ligand>
</feature>
<feature type="binding site" evidence="1">
    <location>
        <position position="137"/>
    </location>
    <ligand>
        <name>CTP</name>
        <dbReference type="ChEBI" id="CHEBI:37563"/>
    </ligand>
</feature>
<feature type="binding site" evidence="1">
    <location>
        <position position="140"/>
    </location>
    <ligand>
        <name>ATP</name>
        <dbReference type="ChEBI" id="CHEBI:30616"/>
    </ligand>
</feature>
<feature type="binding site" evidence="1">
    <location>
        <position position="140"/>
    </location>
    <ligand>
        <name>CTP</name>
        <dbReference type="ChEBI" id="CHEBI:37563"/>
    </ligand>
</feature>